<dbReference type="EMBL" id="AK289866">
    <property type="protein sequence ID" value="BAF82555.1"/>
    <property type="molecule type" value="mRNA"/>
</dbReference>
<dbReference type="EMBL" id="BX537992">
    <property type="protein sequence ID" value="CAD97951.1"/>
    <property type="molecule type" value="mRNA"/>
</dbReference>
<dbReference type="EMBL" id="AL049634">
    <property type="status" value="NOT_ANNOTATED_CDS"/>
    <property type="molecule type" value="Genomic_DNA"/>
</dbReference>
<dbReference type="EMBL" id="AL138804">
    <property type="status" value="NOT_ANNOTATED_CDS"/>
    <property type="molecule type" value="Genomic_DNA"/>
</dbReference>
<dbReference type="EMBL" id="AL592544">
    <property type="status" value="NOT_ANNOTATED_CDS"/>
    <property type="molecule type" value="Genomic_DNA"/>
</dbReference>
<dbReference type="CCDS" id="CCDS46571.1">
    <molecule id="Q5TFQ8-1"/>
</dbReference>
<dbReference type="RefSeq" id="NP_001129316.1">
    <molecule id="Q5TFQ8-1"/>
    <property type="nucleotide sequence ID" value="NM_001135844.4"/>
</dbReference>
<dbReference type="RefSeq" id="NP_001316086.1">
    <molecule id="Q5TFQ8-1"/>
    <property type="nucleotide sequence ID" value="NM_001329157.2"/>
</dbReference>
<dbReference type="PDB" id="2JJV">
    <property type="method" value="X-ray"/>
    <property type="resolution" value="1.80 A"/>
    <property type="chains" value="A/B=30-148"/>
</dbReference>
<dbReference type="PDBsum" id="2JJV"/>
<dbReference type="SMR" id="Q5TFQ8"/>
<dbReference type="BioGRID" id="115609">
    <property type="interactions" value="11"/>
</dbReference>
<dbReference type="GlyConnect" id="1747">
    <property type="glycosylation" value="11 N-Linked glycans (2 sites)"/>
</dbReference>
<dbReference type="GlyCosmos" id="Q5TFQ8">
    <property type="glycosylation" value="4 sites, 11 glycans"/>
</dbReference>
<dbReference type="iPTMnet" id="Q5TFQ8"/>
<dbReference type="BioMuta" id="SIRPB1"/>
<dbReference type="DMDM" id="205829937"/>
<dbReference type="jPOST" id="Q5TFQ8"/>
<dbReference type="MassIVE" id="Q5TFQ8"/>
<dbReference type="ProteomicsDB" id="65089">
    <molecule id="Q5TFQ8-1"/>
</dbReference>
<dbReference type="Pumba" id="Q5TFQ8"/>
<dbReference type="Antibodypedia" id="23124">
    <property type="antibodies" value="342 antibodies from 34 providers"/>
</dbReference>
<dbReference type="DNASU" id="10326"/>
<dbReference type="Ensembl" id="ENST00000279477.11">
    <molecule id="Q5TFQ8-1"/>
    <property type="protein sequence ID" value="ENSP00000279477.7"/>
    <property type="gene ID" value="ENSG00000101307.16"/>
</dbReference>
<dbReference type="Ensembl" id="ENST00000568365.1">
    <molecule id="Q5TFQ8-1"/>
    <property type="protein sequence ID" value="ENSP00000456826.1"/>
    <property type="gene ID" value="ENSG00000101307.16"/>
</dbReference>
<dbReference type="GeneID" id="10326"/>
<dbReference type="KEGG" id="hsa:10326"/>
<dbReference type="UCSC" id="uc002wfl.5">
    <molecule id="Q5TFQ8-1"/>
    <property type="organism name" value="human"/>
</dbReference>
<dbReference type="AGR" id="HGNC:15928"/>
<dbReference type="CTD" id="10326"/>
<dbReference type="DisGeNET" id="10326"/>
<dbReference type="GeneCards" id="SIRPB1"/>
<dbReference type="HGNC" id="HGNC:15928">
    <property type="gene designation" value="SIRPB1"/>
</dbReference>
<dbReference type="HPA" id="ENSG00000101307">
    <property type="expression patterns" value="Tissue enhanced (bone marrow, lung, lymphoid tissue)"/>
</dbReference>
<dbReference type="neXtProt" id="NX_Q5TFQ8"/>
<dbReference type="OpenTargets" id="ENSG00000101307"/>
<dbReference type="PharmGKB" id="PA38051"/>
<dbReference type="VEuPathDB" id="HostDB:ENSG00000101307"/>
<dbReference type="GeneTree" id="ENSGT00960000186656"/>
<dbReference type="HOGENOM" id="CLU_044430_0_0_1"/>
<dbReference type="OMA" id="CITRNES"/>
<dbReference type="OrthoDB" id="6370831at2759"/>
<dbReference type="PathwayCommons" id="Q5TFQ8"/>
<dbReference type="BioGRID-ORCS" id="10326">
    <property type="hits" value="10 hits in 1145 CRISPR screens"/>
</dbReference>
<dbReference type="ChiTaRS" id="SIRPB1">
    <property type="organism name" value="human"/>
</dbReference>
<dbReference type="EvolutionaryTrace" id="Q5TFQ8"/>
<dbReference type="GenomeRNAi" id="10326"/>
<dbReference type="Pharos" id="Q5TFQ8">
    <property type="development level" value="Tbio"/>
</dbReference>
<dbReference type="Proteomes" id="UP000005640">
    <property type="component" value="Chromosome 20"/>
</dbReference>
<dbReference type="Bgee" id="ENSG00000101307">
    <property type="expression patterns" value="Expressed in monocyte and 122 other cell types or tissues"/>
</dbReference>
<dbReference type="ExpressionAtlas" id="Q5TFQ8">
    <property type="expression patterns" value="baseline and differential"/>
</dbReference>
<dbReference type="GO" id="GO:0016020">
    <property type="term" value="C:membrane"/>
    <property type="evidence" value="ECO:0007669"/>
    <property type="project" value="UniProtKB-SubCell"/>
</dbReference>
<dbReference type="CDD" id="cd05772">
    <property type="entry name" value="IgC1_SIRP_domain_2"/>
    <property type="match status" value="1"/>
</dbReference>
<dbReference type="CDD" id="cd16085">
    <property type="entry name" value="IgC1_SIRP_domain_3"/>
    <property type="match status" value="1"/>
</dbReference>
<dbReference type="CDD" id="cd16097">
    <property type="entry name" value="IgV_SIRP"/>
    <property type="match status" value="1"/>
</dbReference>
<dbReference type="FunFam" id="2.60.40.10:FF:000490">
    <property type="entry name" value="Signal-regulatory protein beta 1"/>
    <property type="match status" value="1"/>
</dbReference>
<dbReference type="FunFam" id="2.60.40.10:FF:000295">
    <property type="entry name" value="Tyrosine-protein phosphatase non-receptor type substrate 1"/>
    <property type="match status" value="1"/>
</dbReference>
<dbReference type="FunFam" id="2.60.40.10:FF:000454">
    <property type="entry name" value="Tyrosine-protein phosphatase non-receptor type substrate 1"/>
    <property type="match status" value="1"/>
</dbReference>
<dbReference type="Gene3D" id="2.60.40.10">
    <property type="entry name" value="Immunoglobulins"/>
    <property type="match status" value="3"/>
</dbReference>
<dbReference type="InterPro" id="IPR051755">
    <property type="entry name" value="Ig-like_CS_Receptor"/>
</dbReference>
<dbReference type="InterPro" id="IPR007110">
    <property type="entry name" value="Ig-like_dom"/>
</dbReference>
<dbReference type="InterPro" id="IPR036179">
    <property type="entry name" value="Ig-like_dom_sf"/>
</dbReference>
<dbReference type="InterPro" id="IPR013783">
    <property type="entry name" value="Ig-like_fold"/>
</dbReference>
<dbReference type="InterPro" id="IPR003597">
    <property type="entry name" value="Ig_C1-set"/>
</dbReference>
<dbReference type="InterPro" id="IPR003599">
    <property type="entry name" value="Ig_sub"/>
</dbReference>
<dbReference type="InterPro" id="IPR013106">
    <property type="entry name" value="Ig_V-set"/>
</dbReference>
<dbReference type="PANTHER" id="PTHR19971">
    <property type="entry name" value="SIGNAL-REGULATORY PROTEIN BETA"/>
    <property type="match status" value="1"/>
</dbReference>
<dbReference type="Pfam" id="PF07654">
    <property type="entry name" value="C1-set"/>
    <property type="match status" value="2"/>
</dbReference>
<dbReference type="Pfam" id="PF07686">
    <property type="entry name" value="V-set"/>
    <property type="match status" value="1"/>
</dbReference>
<dbReference type="SMART" id="SM00409">
    <property type="entry name" value="IG"/>
    <property type="match status" value="2"/>
</dbReference>
<dbReference type="SMART" id="SM00407">
    <property type="entry name" value="IGc1"/>
    <property type="match status" value="2"/>
</dbReference>
<dbReference type="SMART" id="SM00406">
    <property type="entry name" value="IGv"/>
    <property type="match status" value="1"/>
</dbReference>
<dbReference type="SUPFAM" id="SSF48726">
    <property type="entry name" value="Immunoglobulin"/>
    <property type="match status" value="3"/>
</dbReference>
<dbReference type="PROSITE" id="PS50835">
    <property type="entry name" value="IG_LIKE"/>
    <property type="match status" value="3"/>
</dbReference>
<keyword id="KW-0002">3D-structure</keyword>
<keyword id="KW-0025">Alternative splicing</keyword>
<keyword id="KW-1015">Disulfide bond</keyword>
<keyword id="KW-0325">Glycoprotein</keyword>
<keyword id="KW-0393">Immunoglobulin domain</keyword>
<keyword id="KW-0472">Membrane</keyword>
<keyword id="KW-1267">Proteomics identification</keyword>
<keyword id="KW-1185">Reference proteome</keyword>
<keyword id="KW-0677">Repeat</keyword>
<keyword id="KW-0732">Signal</keyword>
<keyword id="KW-0812">Transmembrane</keyword>
<keyword id="KW-1133">Transmembrane helix</keyword>
<feature type="signal peptide" evidence="2">
    <location>
        <begin position="1"/>
        <end position="29"/>
    </location>
</feature>
<feature type="chain" id="PRO_0000349108" description="Signal-regulatory protein beta-1 isoform 3">
    <location>
        <begin position="30"/>
        <end position="398"/>
    </location>
</feature>
<feature type="topological domain" description="Extracellular" evidence="2">
    <location>
        <begin position="30"/>
        <end position="371"/>
    </location>
</feature>
<feature type="transmembrane region" description="Helical" evidence="2">
    <location>
        <begin position="372"/>
        <end position="392"/>
    </location>
</feature>
<feature type="topological domain" description="Cytoplasmic" evidence="2">
    <location>
        <begin position="393"/>
        <end position="398"/>
    </location>
</feature>
<feature type="domain" description="Ig-like V-type">
    <location>
        <begin position="31"/>
        <end position="136"/>
    </location>
</feature>
<feature type="domain" description="Ig-like C1-type 1">
    <location>
        <begin position="147"/>
        <end position="246"/>
    </location>
</feature>
<feature type="domain" description="Ig-like C1-type 2">
    <location>
        <begin position="253"/>
        <end position="347"/>
    </location>
</feature>
<feature type="region of interest" description="Disordered" evidence="4">
    <location>
        <begin position="337"/>
        <end position="361"/>
    </location>
</feature>
<feature type="compositionally biased region" description="Basic and acidic residues" evidence="4">
    <location>
        <begin position="337"/>
        <end position="354"/>
    </location>
</feature>
<feature type="glycosylation site" description="N-linked (GlcNAc...) asparagine" evidence="2">
    <location>
        <position position="244"/>
    </location>
</feature>
<feature type="glycosylation site" description="N-linked (GlcNAc...) asparagine" evidence="2">
    <location>
        <position position="291"/>
    </location>
</feature>
<feature type="glycosylation site" description="N-linked (GlcNAc...) asparagine" evidence="2">
    <location>
        <position position="318"/>
    </location>
</feature>
<feature type="disulfide bond" evidence="3 7">
    <location>
        <begin position="54"/>
        <end position="120"/>
    </location>
</feature>
<feature type="disulfide bond" evidence="3">
    <location>
        <begin position="169"/>
        <end position="227"/>
    </location>
</feature>
<feature type="disulfide bond" evidence="3">
    <location>
        <begin position="272"/>
        <end position="330"/>
    </location>
</feature>
<feature type="sequence variant" id="VAR_056077" description="In dbSNP:rs1535882." evidence="5 6">
    <original>R</original>
    <variation>G</variation>
    <location>
        <position position="23"/>
    </location>
</feature>
<feature type="sequence variant" id="VAR_059411" description="In dbSNP:rs1135196.">
    <original>T</original>
    <variation>I</variation>
    <location>
        <position position="51"/>
    </location>
</feature>
<feature type="strand" evidence="8">
    <location>
        <begin position="40"/>
        <end position="45"/>
    </location>
</feature>
<feature type="strand" evidence="8">
    <location>
        <begin position="50"/>
        <end position="52"/>
    </location>
</feature>
<feature type="strand" evidence="8">
    <location>
        <begin position="55"/>
        <end position="57"/>
    </location>
</feature>
<feature type="strand" evidence="8">
    <location>
        <begin position="65"/>
        <end position="69"/>
    </location>
</feature>
<feature type="strand" evidence="8">
    <location>
        <begin position="76"/>
        <end position="80"/>
    </location>
</feature>
<feature type="strand" evidence="8">
    <location>
        <begin position="89"/>
        <end position="93"/>
    </location>
</feature>
<feature type="strand" evidence="8">
    <location>
        <begin position="95"/>
        <end position="97"/>
    </location>
</feature>
<feature type="strand" evidence="8">
    <location>
        <begin position="105"/>
        <end position="107"/>
    </location>
</feature>
<feature type="helix" evidence="8">
    <location>
        <begin position="112"/>
        <end position="114"/>
    </location>
</feature>
<feature type="strand" evidence="8">
    <location>
        <begin position="116"/>
        <end position="124"/>
    </location>
</feature>
<feature type="strand" evidence="8">
    <location>
        <begin position="127"/>
        <end position="129"/>
    </location>
</feature>
<feature type="strand" evidence="8">
    <location>
        <begin position="131"/>
        <end position="135"/>
    </location>
</feature>
<feature type="strand" evidence="8">
    <location>
        <begin position="139"/>
        <end position="144"/>
    </location>
</feature>
<reference key="1">
    <citation type="journal article" date="2004" name="Nat. Genet.">
        <title>Complete sequencing and characterization of 21,243 full-length human cDNAs.</title>
        <authorList>
            <person name="Ota T."/>
            <person name="Suzuki Y."/>
            <person name="Nishikawa T."/>
            <person name="Otsuki T."/>
            <person name="Sugiyama T."/>
            <person name="Irie R."/>
            <person name="Wakamatsu A."/>
            <person name="Hayashi K."/>
            <person name="Sato H."/>
            <person name="Nagai K."/>
            <person name="Kimura K."/>
            <person name="Makita H."/>
            <person name="Sekine M."/>
            <person name="Obayashi M."/>
            <person name="Nishi T."/>
            <person name="Shibahara T."/>
            <person name="Tanaka T."/>
            <person name="Ishii S."/>
            <person name="Yamamoto J."/>
            <person name="Saito K."/>
            <person name="Kawai Y."/>
            <person name="Isono Y."/>
            <person name="Nakamura Y."/>
            <person name="Nagahari K."/>
            <person name="Murakami K."/>
            <person name="Yasuda T."/>
            <person name="Iwayanagi T."/>
            <person name="Wagatsuma M."/>
            <person name="Shiratori A."/>
            <person name="Sudo H."/>
            <person name="Hosoiri T."/>
            <person name="Kaku Y."/>
            <person name="Kodaira H."/>
            <person name="Kondo H."/>
            <person name="Sugawara M."/>
            <person name="Takahashi M."/>
            <person name="Kanda K."/>
            <person name="Yokoi T."/>
            <person name="Furuya T."/>
            <person name="Kikkawa E."/>
            <person name="Omura Y."/>
            <person name="Abe K."/>
            <person name="Kamihara K."/>
            <person name="Katsuta N."/>
            <person name="Sato K."/>
            <person name="Tanikawa M."/>
            <person name="Yamazaki M."/>
            <person name="Ninomiya K."/>
            <person name="Ishibashi T."/>
            <person name="Yamashita H."/>
            <person name="Murakawa K."/>
            <person name="Fujimori K."/>
            <person name="Tanai H."/>
            <person name="Kimata M."/>
            <person name="Watanabe M."/>
            <person name="Hiraoka S."/>
            <person name="Chiba Y."/>
            <person name="Ishida S."/>
            <person name="Ono Y."/>
            <person name="Takiguchi S."/>
            <person name="Watanabe S."/>
            <person name="Yosida M."/>
            <person name="Hotuta T."/>
            <person name="Kusano J."/>
            <person name="Kanehori K."/>
            <person name="Takahashi-Fujii A."/>
            <person name="Hara H."/>
            <person name="Tanase T.-O."/>
            <person name="Nomura Y."/>
            <person name="Togiya S."/>
            <person name="Komai F."/>
            <person name="Hara R."/>
            <person name="Takeuchi K."/>
            <person name="Arita M."/>
            <person name="Imose N."/>
            <person name="Musashino K."/>
            <person name="Yuuki H."/>
            <person name="Oshima A."/>
            <person name="Sasaki N."/>
            <person name="Aotsuka S."/>
            <person name="Yoshikawa Y."/>
            <person name="Matsunawa H."/>
            <person name="Ichihara T."/>
            <person name="Shiohata N."/>
            <person name="Sano S."/>
            <person name="Moriya S."/>
            <person name="Momiyama H."/>
            <person name="Satoh N."/>
            <person name="Takami S."/>
            <person name="Terashima Y."/>
            <person name="Suzuki O."/>
            <person name="Nakagawa S."/>
            <person name="Senoh A."/>
            <person name="Mizoguchi H."/>
            <person name="Goto Y."/>
            <person name="Shimizu F."/>
            <person name="Wakebe H."/>
            <person name="Hishigaki H."/>
            <person name="Watanabe T."/>
            <person name="Sugiyama A."/>
            <person name="Takemoto M."/>
            <person name="Kawakami B."/>
            <person name="Yamazaki M."/>
            <person name="Watanabe K."/>
            <person name="Kumagai A."/>
            <person name="Itakura S."/>
            <person name="Fukuzumi Y."/>
            <person name="Fujimori Y."/>
            <person name="Komiyama M."/>
            <person name="Tashiro H."/>
            <person name="Tanigami A."/>
            <person name="Fujiwara T."/>
            <person name="Ono T."/>
            <person name="Yamada K."/>
            <person name="Fujii Y."/>
            <person name="Ozaki K."/>
            <person name="Hirao M."/>
            <person name="Ohmori Y."/>
            <person name="Kawabata A."/>
            <person name="Hikiji T."/>
            <person name="Kobatake N."/>
            <person name="Inagaki H."/>
            <person name="Ikema Y."/>
            <person name="Okamoto S."/>
            <person name="Okitani R."/>
            <person name="Kawakami T."/>
            <person name="Noguchi S."/>
            <person name="Itoh T."/>
            <person name="Shigeta K."/>
            <person name="Senba T."/>
            <person name="Matsumura K."/>
            <person name="Nakajima Y."/>
            <person name="Mizuno T."/>
            <person name="Morinaga M."/>
            <person name="Sasaki M."/>
            <person name="Togashi T."/>
            <person name="Oyama M."/>
            <person name="Hata H."/>
            <person name="Watanabe M."/>
            <person name="Komatsu T."/>
            <person name="Mizushima-Sugano J."/>
            <person name="Satoh T."/>
            <person name="Shirai Y."/>
            <person name="Takahashi Y."/>
            <person name="Nakagawa K."/>
            <person name="Okumura K."/>
            <person name="Nagase T."/>
            <person name="Nomura N."/>
            <person name="Kikuchi H."/>
            <person name="Masuho Y."/>
            <person name="Yamashita R."/>
            <person name="Nakai K."/>
            <person name="Yada T."/>
            <person name="Nakamura Y."/>
            <person name="Ohara O."/>
            <person name="Isogai T."/>
            <person name="Sugano S."/>
        </authorList>
    </citation>
    <scope>NUCLEOTIDE SEQUENCE [LARGE SCALE MRNA]</scope>
    <scope>VARIANT GLY-23</scope>
    <source>
        <tissue>Caudate nucleus</tissue>
    </source>
</reference>
<reference key="2">
    <citation type="journal article" date="2007" name="BMC Genomics">
        <title>The full-ORF clone resource of the German cDNA consortium.</title>
        <authorList>
            <person name="Bechtel S."/>
            <person name="Rosenfelder H."/>
            <person name="Duda A."/>
            <person name="Schmidt C.P."/>
            <person name="Ernst U."/>
            <person name="Wellenreuther R."/>
            <person name="Mehrle A."/>
            <person name="Schuster C."/>
            <person name="Bahr A."/>
            <person name="Bloecker H."/>
            <person name="Heubner D."/>
            <person name="Hoerlein A."/>
            <person name="Michel G."/>
            <person name="Wedler H."/>
            <person name="Koehrer K."/>
            <person name="Ottenwaelder B."/>
            <person name="Poustka A."/>
            <person name="Wiemann S."/>
            <person name="Schupp I."/>
        </authorList>
    </citation>
    <scope>NUCLEOTIDE SEQUENCE [LARGE SCALE MRNA]</scope>
    <scope>VARIANT GLY-23</scope>
    <source>
        <tissue>Esophageal carcinoma</tissue>
    </source>
</reference>
<reference key="3">
    <citation type="journal article" date="2001" name="Nature">
        <title>The DNA sequence and comparative analysis of human chromosome 20.</title>
        <authorList>
            <person name="Deloukas P."/>
            <person name="Matthews L.H."/>
            <person name="Ashurst J.L."/>
            <person name="Burton J."/>
            <person name="Gilbert J.G.R."/>
            <person name="Jones M."/>
            <person name="Stavrides G."/>
            <person name="Almeida J.P."/>
            <person name="Babbage A.K."/>
            <person name="Bagguley C.L."/>
            <person name="Bailey J."/>
            <person name="Barlow K.F."/>
            <person name="Bates K.N."/>
            <person name="Beard L.M."/>
            <person name="Beare D.M."/>
            <person name="Beasley O.P."/>
            <person name="Bird C.P."/>
            <person name="Blakey S.E."/>
            <person name="Bridgeman A.M."/>
            <person name="Brown A.J."/>
            <person name="Buck D."/>
            <person name="Burrill W.D."/>
            <person name="Butler A.P."/>
            <person name="Carder C."/>
            <person name="Carter N.P."/>
            <person name="Chapman J.C."/>
            <person name="Clamp M."/>
            <person name="Clark G."/>
            <person name="Clark L.N."/>
            <person name="Clark S.Y."/>
            <person name="Clee C.M."/>
            <person name="Clegg S."/>
            <person name="Cobley V.E."/>
            <person name="Collier R.E."/>
            <person name="Connor R.E."/>
            <person name="Corby N.R."/>
            <person name="Coulson A."/>
            <person name="Coville G.J."/>
            <person name="Deadman R."/>
            <person name="Dhami P.D."/>
            <person name="Dunn M."/>
            <person name="Ellington A.G."/>
            <person name="Frankland J.A."/>
            <person name="Fraser A."/>
            <person name="French L."/>
            <person name="Garner P."/>
            <person name="Grafham D.V."/>
            <person name="Griffiths C."/>
            <person name="Griffiths M.N.D."/>
            <person name="Gwilliam R."/>
            <person name="Hall R.E."/>
            <person name="Hammond S."/>
            <person name="Harley J.L."/>
            <person name="Heath P.D."/>
            <person name="Ho S."/>
            <person name="Holden J.L."/>
            <person name="Howden P.J."/>
            <person name="Huckle E."/>
            <person name="Hunt A.R."/>
            <person name="Hunt S.E."/>
            <person name="Jekosch K."/>
            <person name="Johnson C.M."/>
            <person name="Johnson D."/>
            <person name="Kay M.P."/>
            <person name="Kimberley A.M."/>
            <person name="King A."/>
            <person name="Knights A."/>
            <person name="Laird G.K."/>
            <person name="Lawlor S."/>
            <person name="Lehvaeslaiho M.H."/>
            <person name="Leversha M.A."/>
            <person name="Lloyd C."/>
            <person name="Lloyd D.M."/>
            <person name="Lovell J.D."/>
            <person name="Marsh V.L."/>
            <person name="Martin S.L."/>
            <person name="McConnachie L.J."/>
            <person name="McLay K."/>
            <person name="McMurray A.A."/>
            <person name="Milne S.A."/>
            <person name="Mistry D."/>
            <person name="Moore M.J.F."/>
            <person name="Mullikin J.C."/>
            <person name="Nickerson T."/>
            <person name="Oliver K."/>
            <person name="Parker A."/>
            <person name="Patel R."/>
            <person name="Pearce T.A.V."/>
            <person name="Peck A.I."/>
            <person name="Phillimore B.J.C.T."/>
            <person name="Prathalingam S.R."/>
            <person name="Plumb R.W."/>
            <person name="Ramsay H."/>
            <person name="Rice C.M."/>
            <person name="Ross M.T."/>
            <person name="Scott C.E."/>
            <person name="Sehra H.K."/>
            <person name="Shownkeen R."/>
            <person name="Sims S."/>
            <person name="Skuce C.D."/>
            <person name="Smith M.L."/>
            <person name="Soderlund C."/>
            <person name="Steward C.A."/>
            <person name="Sulston J.E."/>
            <person name="Swann R.M."/>
            <person name="Sycamore N."/>
            <person name="Taylor R."/>
            <person name="Tee L."/>
            <person name="Thomas D.W."/>
            <person name="Thorpe A."/>
            <person name="Tracey A."/>
            <person name="Tromans A.C."/>
            <person name="Vaudin M."/>
            <person name="Wall M."/>
            <person name="Wallis J.M."/>
            <person name="Whitehead S.L."/>
            <person name="Whittaker P."/>
            <person name="Willey D.L."/>
            <person name="Williams L."/>
            <person name="Williams S.A."/>
            <person name="Wilming L."/>
            <person name="Wray P.W."/>
            <person name="Hubbard T."/>
            <person name="Durbin R.M."/>
            <person name="Bentley D.R."/>
            <person name="Beck S."/>
            <person name="Rogers J."/>
        </authorList>
    </citation>
    <scope>NUCLEOTIDE SEQUENCE [LARGE SCALE GENOMIC DNA]</scope>
</reference>
<reference key="4">
    <citation type="journal article" date="2008" name="Mol. Cell">
        <title>Paired receptor specificity explained by structures of signal regulatory proteins alone and complexed with CD47.</title>
        <authorList>
            <person name="Hatherley D."/>
            <person name="Graham S.C."/>
            <person name="Turner J."/>
            <person name="Harlos K."/>
            <person name="Stuart D.I."/>
            <person name="Barclay A.N."/>
        </authorList>
    </citation>
    <scope>X-RAY CRYSTALLOGRAPHY (1.8 ANGSTROMS) OF 30-148</scope>
    <scope>DISULFIDE BOND</scope>
</reference>
<organism>
    <name type="scientific">Homo sapiens</name>
    <name type="common">Human</name>
    <dbReference type="NCBI Taxonomy" id="9606"/>
    <lineage>
        <taxon>Eukaryota</taxon>
        <taxon>Metazoa</taxon>
        <taxon>Chordata</taxon>
        <taxon>Craniata</taxon>
        <taxon>Vertebrata</taxon>
        <taxon>Euteleostomi</taxon>
        <taxon>Mammalia</taxon>
        <taxon>Eutheria</taxon>
        <taxon>Euarchontoglires</taxon>
        <taxon>Primates</taxon>
        <taxon>Haplorrhini</taxon>
        <taxon>Catarrhini</taxon>
        <taxon>Hominidae</taxon>
        <taxon>Homo</taxon>
    </lineage>
</organism>
<evidence type="ECO:0000250" key="1"/>
<evidence type="ECO:0000255" key="2"/>
<evidence type="ECO:0000255" key="3">
    <source>
        <dbReference type="PROSITE-ProRule" id="PRU00114"/>
    </source>
</evidence>
<evidence type="ECO:0000256" key="4">
    <source>
        <dbReference type="SAM" id="MobiDB-lite"/>
    </source>
</evidence>
<evidence type="ECO:0000269" key="5">
    <source>
    </source>
</evidence>
<evidence type="ECO:0000269" key="6">
    <source>
    </source>
</evidence>
<evidence type="ECO:0000269" key="7">
    <source>
    </source>
</evidence>
<evidence type="ECO:0007829" key="8">
    <source>
        <dbReference type="PDB" id="2JJV"/>
    </source>
</evidence>
<proteinExistence type="evidence at protein level"/>
<name>SIRBL_HUMAN</name>
<accession>Q5TFQ8</accession>
<accession>Q7Z3B9</accession>
<sequence>MPVPASWPHLPSPFLLMTLLLGRLTGVAGEEELQVIQPDKSISVAAGESATLHCTVTSLIPVGPIQWFRGAGPGRELIYNQKEGHFPRVTTVSDLTKRNNMDFSIRISNITPADAGTYYCVKFRKGSPDHVEFKSGAGTELSVRAKPSAPVVSGPAARATPQHTVSFTCESHGFSPRDITLKWFKNGNELSDFQTNVDPAGDSVSYSIHSTAKVVLTREDVHSQVICEVAHVTLQGDPLRGTANLSETIRVPPTLEVTQQPVRAENQVNVTCQVRKFYPQRLQLTWLENGNVSRTETASTLTENKDGTYNWMSWLLVNVSAHRDDVKLTCQVEHDGQPAVSKSHDLKVSAHPKEQGSNTAPGPALASAAPLLIAFLLGPKVLLVVGVSVIYVYWKQKA</sequence>
<comment type="function">
    <text evidence="1">Immunoglobulin-like cell surface receptor involved in the negative regulation of receptor tyrosine kinase-coupled signaling processes.</text>
</comment>
<comment type="subcellular location">
    <subcellularLocation>
        <location>Membrane</location>
        <topology>Single-pass type I membrane protein</topology>
    </subcellularLocation>
</comment>
<comment type="alternative products">
    <event type="alternative splicing"/>
    <isoform>
        <id>Q5TFQ8-1</id>
        <name>3</name>
        <sequence type="displayed"/>
    </isoform>
    <isoform>
        <id>O00241-1</id>
        <name>1</name>
        <sequence type="external"/>
    </isoform>
    <isoform>
        <id>O00241-2</id>
        <name>2</name>
        <sequence type="external"/>
    </isoform>
</comment>
<protein>
    <recommendedName>
        <fullName>Signal-regulatory protein beta-1 isoform 3</fullName>
        <shortName>SIRP-beta-1 isoform 3</shortName>
    </recommendedName>
</protein>
<gene>
    <name type="primary">SIRPB1</name>
</gene>